<name>GVPJ1_HALSA</name>
<feature type="chain" id="PRO_0000200003" description="Gas vesicle protein J1">
    <location>
        <begin position="1"/>
        <end position="114"/>
    </location>
</feature>
<feature type="region of interest" description="Alpha helix 1" evidence="24">
    <location>
        <begin position="13"/>
        <end position="22"/>
    </location>
</feature>
<feature type="region of interest" description="Beta-strand 1" evidence="24">
    <location>
        <begin position="25"/>
        <end position="35"/>
    </location>
</feature>
<feature type="region of interest" description="Beta-strand 2" evidence="24">
    <location>
        <begin position="40"/>
        <end position="50"/>
    </location>
</feature>
<feature type="region of interest" description="Alpha helix 2" evidence="24">
    <location>
        <begin position="52"/>
        <end position="72"/>
    </location>
</feature>
<feature type="region of interest" description="Disordered" evidence="1">
    <location>
        <begin position="63"/>
        <end position="114"/>
    </location>
</feature>
<feature type="region of interest" description="Alpha helix 3" evidence="24">
    <location>
        <begin position="78"/>
        <end position="87"/>
    </location>
</feature>
<feature type="region of interest" description="Alpha helix 4" evidence="24">
    <location>
        <begin position="95"/>
        <end position="105"/>
    </location>
</feature>
<feature type="short sequence motif" description="Conserved in GvpM1/2 but not GvpA" evidence="18">
    <location>
        <begin position="46"/>
        <end position="50"/>
    </location>
</feature>
<feature type="compositionally biased region" description="Polar residues" evidence="1">
    <location>
        <begin position="75"/>
        <end position="98"/>
    </location>
</feature>
<feature type="compositionally biased region" description="Low complexity" evidence="1">
    <location>
        <begin position="99"/>
        <end position="114"/>
    </location>
</feature>
<feature type="mutagenesis site" description="Does not make gas vesicles, still interacts with GvpL." evidence="11">
    <location>
        <begin position="2"/>
        <end position="5"/>
    </location>
</feature>
<feature type="mutagenesis site" description="Makes a few gas vesicles, still interacts with GvpL." evidence="11">
    <location>
        <begin position="2"/>
        <end position="4"/>
    </location>
</feature>
<feature type="mutagenesis site" description="Does not make gas vesicles, still interacts with GvpL." evidence="11">
    <original>L</original>
    <variation>A</variation>
    <location>
        <position position="13"/>
    </location>
</feature>
<feature type="mutagenesis site" description="Very few gas vesicles, still interacts with GvpL." evidence="11">
    <original>L</original>
    <variation>I</variation>
    <location>
        <position position="13"/>
    </location>
</feature>
<feature type="mutagenesis site" description="Makes no gas vesicles, decreased interaction with GvpL." evidence="11">
    <original>M</original>
    <variation>E</variation>
    <location>
        <position position="19"/>
    </location>
</feature>
<feature type="mutagenesis site" description="Makes no gas vesicles, decreased interaction with GvpL." evidence="11">
    <original>L</original>
    <variation>A</variation>
    <location>
        <position position="20"/>
    </location>
</feature>
<feature type="mutagenesis site" description="Mix of cylindrical and spindle-shaped gas vesicles, still interacts with GvpL." evidence="11">
    <original>D</original>
    <variation>A</variation>
    <location>
        <position position="22"/>
    </location>
</feature>
<feature type="mutagenesis site" description="Unstable gas vesicles that do not float, still interacts with GvpL." evidence="11">
    <original>K</original>
    <variation>A</variation>
    <location>
        <position position="23"/>
    </location>
</feature>
<feature type="mutagenesis site" description="Makes no gas vesicles, decreased interaction with GvpL." evidence="11">
    <original>G</original>
    <variation>A</variation>
    <variation>S</variation>
    <location>
        <position position="24"/>
    </location>
</feature>
<feature type="mutagenesis site" description="Unstable gas vesicles that do not float, still interacts with GvpL." evidence="11">
    <original>V</original>
    <variation>A</variation>
    <location>
        <position position="25"/>
    </location>
</feature>
<feature type="mutagenesis site" description="Very few gas vesicles, still interacts with GvpL." evidence="11">
    <original>E</original>
    <variation>A</variation>
    <location>
        <position position="39"/>
    </location>
</feature>
<feature type="mutagenesis site" description="Unstable gas vesicles that do not float, still interacts with GvpL." evidence="11">
    <original>R</original>
    <variation>A</variation>
    <location>
        <position position="46"/>
    </location>
</feature>
<feature type="mutagenesis site" description="Makes no gas vesicles, decreased interaction with GvpL." evidence="11">
    <original>Y</original>
    <variation>E</variation>
    <location>
        <position position="58"/>
    </location>
</feature>
<feature type="mutagenesis site" description="Cylindrical gas vesicles, still interacts with GvpL." evidence="11">
    <original>E</original>
    <variation>A</variation>
    <location>
        <position position="69"/>
    </location>
</feature>
<feature type="mutagenesis site" description="Does not make gas vesicles, still interacts with GvpL." evidence="11">
    <original>A</original>
    <variation>D</variation>
    <location>
        <position position="74"/>
    </location>
</feature>
<feature type="mutagenesis site" description="Does not make gas vesicles, still interacts with GvpL." evidence="11">
    <location>
        <begin position="110"/>
        <end position="114"/>
    </location>
</feature>
<keyword id="KW-0903">Direct protein sequencing</keyword>
<keyword id="KW-0304">Gas vesicle</keyword>
<keyword id="KW-0614">Plasmid</keyword>
<keyword id="KW-1185">Reference proteome</keyword>
<dbReference type="EMBL" id="M58557">
    <property type="protein sequence ID" value="AAA98189.1"/>
    <property type="molecule type" value="Genomic_DNA"/>
</dbReference>
<dbReference type="EMBL" id="X55648">
    <property type="protein sequence ID" value="CAA39177.1"/>
    <property type="molecule type" value="Genomic_DNA"/>
</dbReference>
<dbReference type="EMBL" id="AF016485">
    <property type="protein sequence ID" value="AAC82802.1"/>
    <property type="molecule type" value="Genomic_DNA"/>
</dbReference>
<dbReference type="EMBL" id="AE004438">
    <property type="protein sequence ID" value="AAG20719.1"/>
    <property type="molecule type" value="Genomic_DNA"/>
</dbReference>
<dbReference type="PIR" id="T08235">
    <property type="entry name" value="T08235"/>
</dbReference>
<dbReference type="RefSeq" id="WP_010890526.1">
    <property type="nucleotide sequence ID" value="NZ_BK010831.1"/>
</dbReference>
<dbReference type="SMR" id="P24374"/>
<dbReference type="GeneID" id="5954625"/>
<dbReference type="KEGG" id="hal:gvpJ"/>
<dbReference type="KEGG" id="hal:VNG_6022G"/>
<dbReference type="PATRIC" id="fig|64091.14.peg.2093"/>
<dbReference type="HOGENOM" id="CLU_126378_1_0_2"/>
<dbReference type="InParanoid" id="P24374"/>
<dbReference type="OrthoDB" id="170622at2157"/>
<dbReference type="PhylomeDB" id="P24374"/>
<dbReference type="Proteomes" id="UP000000554">
    <property type="component" value="Plasmid pNRC100"/>
</dbReference>
<dbReference type="Proteomes" id="UP000000554">
    <property type="component" value="Plasmid pNRC200"/>
</dbReference>
<dbReference type="GO" id="GO:0031411">
    <property type="term" value="C:gas vesicle"/>
    <property type="evidence" value="ECO:0007669"/>
    <property type="project" value="UniProtKB-SubCell"/>
</dbReference>
<dbReference type="GO" id="GO:0012506">
    <property type="term" value="C:vesicle membrane"/>
    <property type="evidence" value="ECO:0007669"/>
    <property type="project" value="InterPro"/>
</dbReference>
<dbReference type="GO" id="GO:0005198">
    <property type="term" value="F:structural molecule activity"/>
    <property type="evidence" value="ECO:0007669"/>
    <property type="project" value="InterPro"/>
</dbReference>
<dbReference type="InterPro" id="IPR000638">
    <property type="entry name" value="Gas-vesicle_GvpA-like"/>
</dbReference>
<dbReference type="InterPro" id="IPR050530">
    <property type="entry name" value="GvpA"/>
</dbReference>
<dbReference type="InterPro" id="IPR018493">
    <property type="entry name" value="GvpA-like_CS"/>
</dbReference>
<dbReference type="NCBIfam" id="NF046090">
    <property type="entry name" value="halo_gas_GvpJ"/>
    <property type="match status" value="1"/>
</dbReference>
<dbReference type="PANTHER" id="PTHR35344:SF4">
    <property type="entry name" value="GAS VESICLE PROTEIN A1"/>
    <property type="match status" value="1"/>
</dbReference>
<dbReference type="PANTHER" id="PTHR35344">
    <property type="entry name" value="GAS VESICLE STRUCTURAL PROTEIN 2-RELATED"/>
    <property type="match status" value="1"/>
</dbReference>
<dbReference type="Pfam" id="PF00741">
    <property type="entry name" value="Gas_vesicle"/>
    <property type="match status" value="1"/>
</dbReference>
<dbReference type="PROSITE" id="PS00234">
    <property type="entry name" value="GAS_VESICLE_A_1"/>
    <property type="match status" value="1"/>
</dbReference>
<dbReference type="PROSITE" id="PS00669">
    <property type="entry name" value="GAS_VESICLE_A_2"/>
    <property type="match status" value="1"/>
</dbReference>
<evidence type="ECO:0000256" key="1">
    <source>
        <dbReference type="SAM" id="MobiDB-lite"/>
    </source>
</evidence>
<evidence type="ECO:0000269" key="2">
    <source>
    </source>
</evidence>
<evidence type="ECO:0000269" key="3">
    <source>
    </source>
</evidence>
<evidence type="ECO:0000269" key="4">
    <source>
    </source>
</evidence>
<evidence type="ECO:0000269" key="5">
    <source>
    </source>
</evidence>
<evidence type="ECO:0000269" key="6">
    <source>
    </source>
</evidence>
<evidence type="ECO:0000269" key="7">
    <source>
    </source>
</evidence>
<evidence type="ECO:0000269" key="8">
    <source>
    </source>
</evidence>
<evidence type="ECO:0000269" key="9">
    <source>
    </source>
</evidence>
<evidence type="ECO:0000269" key="10">
    <source>
    </source>
</evidence>
<evidence type="ECO:0000269" key="11">
    <source>
    </source>
</evidence>
<evidence type="ECO:0000269" key="12">
    <source>
    </source>
</evidence>
<evidence type="ECO:0000269" key="13">
    <source>
    </source>
</evidence>
<evidence type="ECO:0000269" key="14">
    <source>
    </source>
</evidence>
<evidence type="ECO:0000303" key="15">
    <source>
    </source>
</evidence>
<evidence type="ECO:0000303" key="16">
    <source>
    </source>
</evidence>
<evidence type="ECO:0000303" key="17">
    <source>
    </source>
</evidence>
<evidence type="ECO:0000303" key="18">
    <source>
    </source>
</evidence>
<evidence type="ECO:0000305" key="19"/>
<evidence type="ECO:0000305" key="20">
    <source>
    </source>
</evidence>
<evidence type="ECO:0000305" key="21">
    <source>
    </source>
</evidence>
<evidence type="ECO:0000305" key="22">
    <source>
    </source>
</evidence>
<evidence type="ECO:0000305" key="23">
    <source>
    </source>
</evidence>
<evidence type="ECO:0000305" key="24">
    <source>
    </source>
</evidence>
<evidence type="ECO:0000305" key="25">
    <source>
    </source>
</evidence>
<evidence type="ECO:0000312" key="26">
    <source>
        <dbReference type="EMBL" id="AAA98189.1"/>
    </source>
</evidence>
<evidence type="ECO:0000312" key="27">
    <source>
        <dbReference type="EMBL" id="AAG20719.1"/>
    </source>
</evidence>
<evidence type="ECO:0000312" key="28">
    <source>
        <dbReference type="EMBL" id="CAA39177.1"/>
    </source>
</evidence>
<protein>
    <recommendedName>
        <fullName evidence="17">Gas vesicle protein J1</fullName>
        <shortName evidence="17">GvpJ1</shortName>
    </recommendedName>
</protein>
<proteinExistence type="evidence at protein level"/>
<organism>
    <name type="scientific">Halobacterium salinarum (strain ATCC 700922 / JCM 11081 / NRC-1)</name>
    <name type="common">Halobacterium halobium</name>
    <dbReference type="NCBI Taxonomy" id="64091"/>
    <lineage>
        <taxon>Archaea</taxon>
        <taxon>Methanobacteriati</taxon>
        <taxon>Methanobacteriota</taxon>
        <taxon>Stenosarchaea group</taxon>
        <taxon>Halobacteria</taxon>
        <taxon>Halobacteriales</taxon>
        <taxon>Halobacteriaceae</taxon>
        <taxon>Halobacterium</taxon>
        <taxon>Halobacterium salinarum NRC-34001</taxon>
    </lineage>
</organism>
<gene>
    <name type="primary">gvpJ11</name>
    <name evidence="16" type="synonym">gvpJ</name>
    <name evidence="15" type="synonym">p-gvpJ</name>
    <name type="ordered locus">VNG_5022G</name>
</gene>
<gene>
    <name evidence="27" type="primary">gvpJ1</name>
    <name evidence="27" type="ordered locus">VNG_6022G</name>
</gene>
<geneLocation type="plasmid">
    <name>pNRC100</name>
</geneLocation>
<geneLocation type="plasmid">
    <name>pNRC200</name>
</geneLocation>
<geneLocation type="plasmid">
    <name>pHH1</name>
</geneLocation>
<reference evidence="26" key="1">
    <citation type="journal article" date="1991" name="Gene">
        <title>Structure and organization of the gas vesicle gene cluster on the Halobacterium halobium plasmid pNRC100.</title>
        <authorList>
            <person name="Jones J.G."/>
            <person name="Young D.C."/>
            <person name="Dassarma S."/>
        </authorList>
    </citation>
    <scope>NUCLEOTIDE SEQUENCE [GENOMIC DNA]</scope>
    <source>
        <strain>ATCC 700922 / JCM 11081 / NRC-1</strain>
        <plasmid>pNRC100</plasmid>
    </source>
</reference>
<reference evidence="28" key="2">
    <citation type="journal article" date="1991" name="Mol. Microbiol.">
        <title>A DNA region of 9 kbp contains all genes necessary for gas vesicle synthesis in halophilic archaebacteria.</title>
        <authorList>
            <person name="Horne M."/>
            <person name="Englert C."/>
            <person name="Wimmer C."/>
            <person name="Pfeifer F."/>
        </authorList>
    </citation>
    <scope>NUCLEOTIDE SEQUENCE [GENOMIC DNA]</scope>
    <scope>INDUCTION</scope>
    <source>
        <strain>NRC-817</strain>
        <plasmid>pHH1</plasmid>
    </source>
</reference>
<reference key="3">
    <citation type="journal article" date="1998" name="Genome Res.">
        <title>Snapshot of a large dynamic replicon in a halophilic archaeon: megaplasmid or minichromosome?</title>
        <authorList>
            <person name="Ng W.V."/>
            <person name="Ciufo S.A."/>
            <person name="Smith T.M."/>
            <person name="Bumgarner R.E."/>
            <person name="Baskin D."/>
            <person name="Faust J."/>
            <person name="Hall B."/>
            <person name="Loretz C."/>
            <person name="Seto J."/>
            <person name="Slagel J."/>
            <person name="Hood L."/>
            <person name="DasSarma S."/>
        </authorList>
    </citation>
    <scope>NUCLEOTIDE SEQUENCE [LARGE SCALE GENOMIC DNA]</scope>
    <source>
        <strain>ATCC 700922 / JCM 11081 / NRC-1</strain>
        <plasmid>pNRC100</plasmid>
    </source>
</reference>
<reference evidence="27" key="4">
    <citation type="journal article" date="2000" name="Proc. Natl. Acad. Sci. U.S.A.">
        <title>Genome sequence of Halobacterium species NRC-1.</title>
        <authorList>
            <person name="Ng W.V."/>
            <person name="Kennedy S.P."/>
            <person name="Mahairas G.G."/>
            <person name="Berquist B."/>
            <person name="Pan M."/>
            <person name="Shukla H.D."/>
            <person name="Lasky S.R."/>
            <person name="Baliga N.S."/>
            <person name="Thorsson V."/>
            <person name="Sbrogna J."/>
            <person name="Swartzell S."/>
            <person name="Weir D."/>
            <person name="Hall J."/>
            <person name="Dahl T.A."/>
            <person name="Welti R."/>
            <person name="Goo Y.A."/>
            <person name="Leithauser B."/>
            <person name="Keller K."/>
            <person name="Cruz R."/>
            <person name="Danson M.J."/>
            <person name="Hough D.W."/>
            <person name="Maddocks D.G."/>
            <person name="Jablonski P.E."/>
            <person name="Krebs M.P."/>
            <person name="Angevine C.M."/>
            <person name="Dale H."/>
            <person name="Isenbarger T.A."/>
            <person name="Peck R.F."/>
            <person name="Pohlschroder M."/>
            <person name="Spudich J.L."/>
            <person name="Jung K.-H."/>
            <person name="Alam M."/>
            <person name="Freitas T."/>
            <person name="Hou S."/>
            <person name="Daniels C.J."/>
            <person name="Dennis P.P."/>
            <person name="Omer A.D."/>
            <person name="Ebhardt H."/>
            <person name="Lowe T.M."/>
            <person name="Liang P."/>
            <person name="Riley M."/>
            <person name="Hood L."/>
            <person name="DasSarma S."/>
        </authorList>
    </citation>
    <scope>NUCLEOTIDE SEQUENCE [LARGE SCALE GENOMIC DNA]</scope>
    <source>
        <strain>ATCC 700922 / JCM 11081 / NRC-1</strain>
        <plasmid>pNRC200</plasmid>
    </source>
</reference>
<reference key="5">
    <citation type="journal article" date="2011" name="J. Proteome Res.">
        <title>New structural proteins of Halobacterium salinarum gas vesicle revealed by comparative proteomics analysis.</title>
        <authorList>
            <person name="Chu L.J."/>
            <person name="Chen M.C."/>
            <person name="Setter J."/>
            <person name="Tsai Y.S."/>
            <person name="Yang H."/>
            <person name="Fang X."/>
            <person name="Ting Y.S."/>
            <person name="Shaffer S.A."/>
            <person name="Taylor G.K."/>
            <person name="von Haller P.D."/>
            <person name="Goodlett D.R."/>
            <person name="Ng W.V."/>
        </authorList>
    </citation>
    <scope>PROTEIN SEQUENCE OF 47-58</scope>
    <scope>SUBCELLULAR LOCATION</scope>
    <scope>IDENTIFICATION BY MASS SPECTROMETRY</scope>
    <source>
        <strain>ATCC 700922 / JCM 11081 / NRC-1</strain>
    </source>
</reference>
<reference key="6">
    <citation type="journal article" date="1992" name="Gene">
        <title>Genetic transformation of a halophilic archaebacterium with a gas vesicle gene cluster restores its ability to float.</title>
        <authorList>
            <person name="Halladay J.T."/>
            <person name="Ng W.L."/>
            <person name="DasSarma S."/>
        </authorList>
    </citation>
    <scope>FUNCTION</scope>
    <scope>GAS VESICLE PRODUCTION</scope>
    <source>
        <strain>ATCC 700922 / JCM 11081 / NRC-1</strain>
        <plasmid>pNRC100</plasmid>
    </source>
</reference>
<reference key="7">
    <citation type="journal article" date="1992" name="J. Mol. Biol.">
        <title>Three different but related gene clusters encoding gas vesicles in halophilic archaea.</title>
        <authorList>
            <person name="Englert C."/>
            <person name="Krueger K."/>
            <person name="Offner S."/>
            <person name="Pfeifer F."/>
        </authorList>
    </citation>
    <scope>GAS VESICLE GENE CLUSTER</scope>
    <source>
        <strain>NRC-817</strain>
        <plasmid>pHH1</plasmid>
    </source>
</reference>
<reference key="8">
    <citation type="journal article" date="1994" name="J. Bacteriol.">
        <title>Wild-type gas vesicle formation requires at least ten genes in the gvp gene cluster of Halobacterium halobium plasmid pNRC100.</title>
        <authorList>
            <person name="DasSarma S."/>
            <person name="Arora P."/>
            <person name="Lin F."/>
            <person name="Molinari E."/>
            <person name="Yin L.R."/>
        </authorList>
    </citation>
    <scope>DISRUPTION PHENOTYPE</scope>
    <source>
        <strain>ATCC 700922 / JCM 11081 / NRC-1</strain>
        <plasmid>pNRC100</plasmid>
    </source>
</reference>
<reference key="9">
    <citation type="journal article" date="1995" name="Mol. Microbiol.">
        <title>Complementation studies with the gas vesicle-encoding p-vac region of Halobacterium salinarium PHH1 reveal a regulatory role for the p-gvpDE genes.</title>
        <authorList>
            <person name="Offner S."/>
            <person name="Pfeifer F."/>
        </authorList>
    </citation>
    <scope>FUNCTION</scope>
    <scope>INDUCTION</scope>
</reference>
<reference key="10">
    <citation type="journal article" date="1997" name="Microbiology">
        <title>Growth competition between Halobacterium salinarium strain PHH1 and mutants affected in gas vesicle synthesis.</title>
        <authorList>
            <person name="Beard S.J."/>
            <person name="Hayes P.K."/>
            <person name="Walsby A.E."/>
        </authorList>
    </citation>
    <scope>FUNCTION IN BUOYANCY</scope>
    <scope>POSSIBLE INDUCTION BY OXYGEN LIMITATION</scope>
    <source>
        <strain>PHH1</strain>
    </source>
</reference>
<reference key="11">
    <citation type="journal article" date="2000" name="J. Bacteriol.">
        <title>Eight of fourteen gvp genes are sufficient for formation of gas vesicles in halophilic archaea.</title>
        <authorList>
            <person name="Offner S."/>
            <person name="Hofacker A."/>
            <person name="Wanner G."/>
            <person name="Pfeifer F."/>
        </authorList>
    </citation>
    <scope>DISRUPTION PHENOTYPE</scope>
    <source>
        <strain>PHH1</strain>
        <plasmid>pHH1</plasmid>
    </source>
</reference>
<reference key="12">
    <citation type="journal article" date="2004" name="J. Bacteriol.">
        <title>Complexity of gas vesicle biogenesis in Halobacterium sp. strain NRC-1: identification of five new proteins.</title>
        <authorList>
            <person name="Shukla H.D."/>
            <person name="DasSarma S."/>
        </authorList>
    </citation>
    <scope>POSSIBLE FUNCTION</scope>
    <scope>SUBCELLULAR LOCATION</scope>
    <source>
        <strain>ATCC 700922 / JCM 11081 / NRC-1</strain>
        <plasmid>pNRC100</plasmid>
    </source>
</reference>
<reference key="13">
    <citation type="journal article" date="2014" name="Extremophiles">
        <title>The accessory gas vesicle protein GvpM of haloarchaea and its interaction partners during gas vesicle formation.</title>
        <authorList>
            <person name="Tavlaridou S."/>
            <person name="Winter K."/>
            <person name="Pfeifer F."/>
        </authorList>
    </citation>
    <scope>FUNCTION</scope>
    <scope>SUBUNIT</scope>
    <source>
        <strain>PHH1</strain>
    </source>
</reference>
<reference key="14">
    <citation type="journal article" date="2020" name="Front. Microbiol.">
        <title>Accessory Gvp Proteins Form a Complex During Gas Vesicle Formation of Haloarchaea.</title>
        <authorList>
            <person name="Voelkner K."/>
            <person name="Jost A."/>
            <person name="Pfeifer F."/>
        </authorList>
    </citation>
    <scope>FUNCTION</scope>
    <scope>SUBUNIT</scope>
    <source>
        <strain>PHH1</strain>
        <plasmid>pHH1</plasmid>
    </source>
</reference>
<reference key="15">
    <citation type="journal article" date="2021" name="Front. Microbiol.">
        <title>Effect of Mutations in GvpJ and GvpM on Gas Vesicle Formation of Halobacterium salinarum.</title>
        <authorList>
            <person name="Jost A."/>
            <person name="Knitsch R."/>
            <person name="Voelkner K."/>
            <person name="Pfeifer F."/>
        </authorList>
    </citation>
    <scope>FUNCTION</scope>
    <scope>INTERACTION WITH GVPG1; GVPH1; GVPL1 AND GVPM1</scope>
    <scope>DOMAIN</scope>
    <scope>MUTAGENESIS OF 2-SER--LYS-5; 2-SER--PRO-4; LEU-13; MET-19; LEU-20; ASP-22; LYS-23; GLY-24; VAL-25; GLU-39; ARG-46; TYR-58; GLU-69; ALA-74 AND 110-ALA--LYS-114</scope>
    <source>
        <strain>PHH1</strain>
        <plasmid>pHH1</plasmid>
    </source>
</reference>
<reference key="16">
    <citation type="journal article" date="2022" name="Front. Microbiol.">
        <title>Interaction of the gas vesicle proteins GvpA, GvpC, GvpN, and GvpO of Halobacterium salinarum.</title>
        <authorList>
            <person name="Jost A."/>
            <person name="Pfeifer F."/>
        </authorList>
    </citation>
    <scope>SUBUNIT</scope>
    <source>
        <strain>PHH1</strain>
        <plasmid>pHH1</plasmid>
    </source>
</reference>
<comment type="function">
    <text evidence="5 7 10 11 20 22 23 24">Proteins GvpF to GvpM might be involved in nucleating gas vesicle formation (Probable) (PubMed:15126480, PubMed:24846741, PubMed:33281806, PubMed:34975818). Mutagenesis of residues 13-61 shows that almost none of them can be substituted and still make gas vesicles (PubMed:34975818). A minor component of the gas vesicle (Probable) (PubMed:15126480, PubMed:21158390). Gas vesicles are hollow, gas filled proteinaceous nanostructures found in several microbial planktonic microorganisms. They allow positioning of halobacteria at the optimal depth for growth in the poorly aerated, shallow brine pools of their habitat (PubMed:33711860).</text>
</comment>
<comment type="function">
    <text evidence="2 3 4 13 14">Expression of a 9.5 kb p-vac DNA fragment containing 2 divergently transcribed regions (gvpD-gvpE-gvpF-gvpG-gvpH-gvpI-gvpJ-gvpK-gvpL-gvpM and gvpA-gvpC-gvpN-gvpO) allows H.volcanii to produce gas vesicles. All site-directed mutagenesis is tested in H.volcanii (PubMed:10894744, PubMed:1404376, PubMed:7651141). A minimal gas vesicle can be made in H.volcanii by gvpA1-gvpO1 plus gvpF1-gvpG1-gvpJ1-gvpK1-gvpL1-gvpM1; lack of enough GvpJ1 prevents formation (PubMed:10894744). A similar region restores gas vesicle production in H.halobium without the p-vac locus, but it still has the c-vac locus (PubMed:1398080, PubMed:8002589).</text>
</comment>
<comment type="subunit">
    <text evidence="8 9 11 12">GvpF to GvpM interact with each other in vitro, and may form multi-subunit complex(es) (PubMed:24846741, PubMed:33281806, PubMed:34975818). Interacts with GvpA1 (PubMed:34975818, PubMed:35966690).</text>
</comment>
<comment type="subcellular location">
    <subcellularLocation>
        <location evidence="5 7">Gas vesicle</location>
    </subcellularLocation>
</comment>
<comment type="induction">
    <text evidence="6 10 25">Probably part of a gvpF1-gvpG1-gvpH1-gvpI1-gvpJ1-gvpK1-gvpL1-gvpM1 operon, maximally expressed in early to mid log phase (Probable) (PubMed:1956294). Gas vesicles appear earlier when grown in static culture, possibly due to O(2)-limitation (PubMed:33711860).</text>
</comment>
<comment type="domain">
    <text evidence="11">Modeled by homology to GvpA to have 4 alpha helices and 2 beta-sheets. Extensive mutagenesis shows that most mutations in the N-terminal region (homologous to GvpA) do not make gas vesicles (PubMed:34975818). A short motif conserved in GvpJ1/2 and GvpM1/2 (but not GvpA), which is predicted to be on the outer surface of the proteins, is important for the function of GvpJ and GvpM (PubMed:34975818).</text>
</comment>
<comment type="disruption phenotype">
    <text evidence="2 14">Deletion of this gene prevents gas vesicle formation.</text>
</comment>
<comment type="miscellaneous">
    <text evidence="4 6 10">Encoded in a 14-gene plasmid locus called p-vac which produces predominantly short, spindle-shaped gas vesicles during all stages of growth.</text>
</comment>
<comment type="similarity">
    <text evidence="19 21">Belongs to the gas vesicle GvpA family.</text>
</comment>
<comment type="caution">
    <text evidence="7">The protein sequence for residues 47-58 could come from either GvpJ1 or GvpJ2.</text>
</comment>
<accession>P24374</accession>
<accession>Q9HI25</accession>
<sequence>MSDPKPTRSQGDLAEMLEMLLDKGVVVNADIAVSVGDTELLGIELRAAIASFETAAEYGLEFPTGTDMERVESAANISPDQSDPASETQSETESTNPLSDDSTPTASTSAEETK</sequence>